<keyword id="KW-0167">Capsid protein</keyword>
<keyword id="KW-1176">Cytoplasmic inwards viral transport</keyword>
<keyword id="KW-1048">Host nucleus</keyword>
<keyword id="KW-0945">Host-virus interaction</keyword>
<keyword id="KW-0426">Late protein</keyword>
<keyword id="KW-1177">Microtubular inwards viral transport</keyword>
<keyword id="KW-0597">Phosphoprotein</keyword>
<keyword id="KW-1148">T=25 icosahedral capsid protein</keyword>
<keyword id="KW-0946">Virion</keyword>
<keyword id="KW-1160">Virus entry into host cell</keyword>
<accession>P48308</accession>
<accession>O11839</accession>
<name>CAPSH_ADEM1</name>
<sequence length="909" mass="102369">MTTPSMQPQWAFMHIAGQDASQYLSPGVVQFAAATDTYFSLGNKFRNPTVAPTHDVTTDRSQRLTLRIVPVDREDSQYTYKTRFQLSVGDNRVLDMASTYFDIRGRLDRGPSFKPYSGTAYNSLAPRAAPNNLMFKTGADSKTMTIAQANIVGSTIDQDGLKINNVALNPNAGEPAVQEGLENWMEELQIGADKKFASRVLKADQPVLPNYGSYAYPTNINGTQTKDGTTVDKVYMCSKGANVQNPDVVLYSEEVNLQAPDTHLLDGPGADNPKDRVAFCAAPNRPNYIGFRDNFIGLMYYNSNGNQGVLAGQASQLNAVVDLQDRNTELSYQFLLDSLYDRSRYFSLWNQAIDSYDPRVRIIENDGVEDDITSFAFDLRGIGDLPYKQVQTHNGNQQSANTTDTCYIGKGNMAAMEINIPANLWLGFLYANVAQYMPDDFKVDPSNIQMPQDKTTYAYMNQRIAPAGLIETYVNVGGRWSVDFMDTVNPFNHHRNEGLKYRSQILGNGRFVDFHIQVPQKFFAIKSLLLLPGSYTYEWSFRKDVNMVLQSSLGNDLRADGARLEIHSVNLYASFFPMAHNTASTLEAMLRNETNDQTFLDYLSSATMMFPIPAGQTQVPVSIPARNWAAFRGWSFTRIKQQETPNIGSPYDPYFKYSGSIPFLDATFYLTHTFQRVSIMFDSSVSWPGNDRLLTPNEFEIKRHIDAEGLCVGQSNMTKDWFLVQMLSNYNIGYQGFYLPENNKDRTYSFVRNFEPLARQVVDDAAAANYRDVPLSKRFNNSGWRSAGPPIFAREGAPYPANWPYPLCGEAAWAAKTQRKFLVDRYMYRIPFSSNFMSMGALTDLGQNLLYANSAHSLEMTFNVDPMQEATFLYILFEVFDCVRIHQPHRGIIEAVYLRSPFSAGNATT</sequence>
<proteinExistence type="inferred from homology"/>
<gene>
    <name evidence="1" type="primary">L3</name>
</gene>
<protein>
    <recommendedName>
        <fullName evidence="1">Hexon protein</fullName>
        <shortName evidence="1">CP-H</shortName>
    </recommendedName>
    <alternativeName>
        <fullName evidence="1">Protein II</fullName>
    </alternativeName>
</protein>
<dbReference type="EMBL" id="M81889">
    <property type="protein sequence ID" value="AAB48187.1"/>
    <property type="molecule type" value="Genomic_DNA"/>
</dbReference>
<dbReference type="SMR" id="P48308"/>
<dbReference type="GO" id="GO:0043657">
    <property type="term" value="C:host cell"/>
    <property type="evidence" value="ECO:0007669"/>
    <property type="project" value="GOC"/>
</dbReference>
<dbReference type="GO" id="GO:0042025">
    <property type="term" value="C:host cell nucleus"/>
    <property type="evidence" value="ECO:0007669"/>
    <property type="project" value="UniProtKB-SubCell"/>
</dbReference>
<dbReference type="GO" id="GO:0039623">
    <property type="term" value="C:T=25 icosahedral viral capsid"/>
    <property type="evidence" value="ECO:0007669"/>
    <property type="project" value="UniProtKB-UniRule"/>
</dbReference>
<dbReference type="GO" id="GO:0005198">
    <property type="term" value="F:structural molecule activity"/>
    <property type="evidence" value="ECO:0007669"/>
    <property type="project" value="UniProtKB-UniRule"/>
</dbReference>
<dbReference type="GO" id="GO:0075521">
    <property type="term" value="P:microtubule-dependent intracellular transport of viral material towards nucleus"/>
    <property type="evidence" value="ECO:0007669"/>
    <property type="project" value="UniProtKB-UniRule"/>
</dbReference>
<dbReference type="GO" id="GO:0046718">
    <property type="term" value="P:symbiont entry into host cell"/>
    <property type="evidence" value="ECO:0007669"/>
    <property type="project" value="UniProtKB-UniRule"/>
</dbReference>
<dbReference type="Gene3D" id="2.70.9.10">
    <property type="entry name" value="Adenovirus Type 2 Hexon, domain 4"/>
    <property type="match status" value="2"/>
</dbReference>
<dbReference type="Gene3D" id="3.90.39.10">
    <property type="entry name" value="Hexon Major Viral Coat Protein, domain 2"/>
    <property type="match status" value="1"/>
</dbReference>
<dbReference type="Gene3D" id="3.90.249.10">
    <property type="entry name" value="Hexon Major Viral Coat Protein, domain 3"/>
    <property type="match status" value="2"/>
</dbReference>
<dbReference type="HAMAP" id="MF_04051">
    <property type="entry name" value="ADV_CAPSH"/>
    <property type="match status" value="1"/>
</dbReference>
<dbReference type="InterPro" id="IPR016108">
    <property type="entry name" value="Adenovirus_Pll_hexon_C"/>
</dbReference>
<dbReference type="InterPro" id="IPR016107">
    <property type="entry name" value="Adenovirus_Pll_hexon_N"/>
</dbReference>
<dbReference type="InterPro" id="IPR044942">
    <property type="entry name" value="Adenovirus_Pll_hexon_sub2"/>
</dbReference>
<dbReference type="InterPro" id="IPR016110">
    <property type="entry name" value="Adenovirus_Pll_hexon_sub3"/>
</dbReference>
<dbReference type="InterPro" id="IPR037542">
    <property type="entry name" value="ADV_hexon"/>
</dbReference>
<dbReference type="InterPro" id="IPR016112">
    <property type="entry name" value="VP_dsDNA_II"/>
</dbReference>
<dbReference type="Pfam" id="PF01065">
    <property type="entry name" value="Adeno_hexon"/>
    <property type="match status" value="1"/>
</dbReference>
<dbReference type="Pfam" id="PF03678">
    <property type="entry name" value="Adeno_hexon_C"/>
    <property type="match status" value="1"/>
</dbReference>
<dbReference type="SUPFAM" id="SSF49749">
    <property type="entry name" value="Group II dsDNA viruses VP"/>
    <property type="match status" value="2"/>
</dbReference>
<comment type="function">
    <text evidence="1">Major capsid protein that self-associates to form 240 hexon trimers, each in the shape of a hexagon, building most of the pseudo T=25 capsid. Assembled into trimeric units with the help of the chaperone shutoff protein. Transported by pre-protein VI to the nucleus where it associates with other structural proteins to form an empty capsid. Might be involved, through its interaction with host dyneins, in the intracellular microtubule-dependent transport of incoming viral capsid to the nucleus.</text>
</comment>
<comment type="subunit">
    <text evidence="1">Homotrimer. Interacts with the capsid vertex protein; this interaction binds the peripentonal hexons to the neighboring penton base. Interacts with the hexon-linking protein; this interaction tethers the hexons surrounding the penton to those situated in the central plate of the facet. Interacts with the hexon-interlacing protein; this interaction lashes the hexons together. Interacts with host dyneins DYNC1LI1 and DYNC1I2; this interaction might be involved in intracellular microtubule-dependent transport of incoming viral capsid. Interacts with the shutoff protein; this interaction allows folding and formation of hexons trimers. Interacts with pre-protein VI; this interaction probably allows nuclear import of hexon trimers and possibly pre-capsid assembly.</text>
</comment>
<comment type="subcellular location">
    <subcellularLocation>
        <location evidence="1">Virion</location>
    </subcellularLocation>
    <subcellularLocation>
        <location evidence="1">Host nucleus</location>
    </subcellularLocation>
    <text evidence="1">Forms the capsid icosahedric shell. Present in 720 copies per virion, assembled in 240 trimers.</text>
</comment>
<comment type="induction">
    <text evidence="1">Expressed in the late phase of the viral replicative cycle.</text>
</comment>
<comment type="miscellaneous">
    <text evidence="1">All late proteins expressed from the major late promoter are produced by alternative splicing and alternative polyadenylation of the same gene giving rise to non-overlapping ORFs. A leader sequence is present in the N-terminus of all these mRNAs and is recognized by the viral shutoff protein to provide expression although conventional translation via ribosome scanning from the cap has been shut off in the host cell.</text>
</comment>
<comment type="similarity">
    <text evidence="1 2">Belongs to the adenoviridae hexon protein family.</text>
</comment>
<organism>
    <name type="scientific">Murine adenovirus A serotype 1</name>
    <name type="common">MAdV-1</name>
    <name type="synonym">Murine adenovirus 1</name>
    <dbReference type="NCBI Taxonomy" id="10530"/>
    <lineage>
        <taxon>Viruses</taxon>
        <taxon>Varidnaviria</taxon>
        <taxon>Bamfordvirae</taxon>
        <taxon>Preplasmiviricota</taxon>
        <taxon>Tectiliviricetes</taxon>
        <taxon>Rowavirales</taxon>
        <taxon>Adenoviridae</taxon>
        <taxon>Mastadenovirus</taxon>
        <taxon>Murine mastadenovirus A</taxon>
    </lineage>
</organism>
<organismHost>
    <name type="scientific">Mus musculus</name>
    <name type="common">Mouse</name>
    <dbReference type="NCBI Taxonomy" id="10090"/>
</organismHost>
<reference key="1">
    <citation type="journal article" date="1994" name="J. Gen. Virol.">
        <title>Sequence and structural analysis of murine adenovirus type 1 hexon.</title>
        <authorList>
            <person name="Weber J.M."/>
            <person name="Cai F."/>
            <person name="Murali R."/>
            <person name="Burnett R.M."/>
        </authorList>
    </citation>
    <scope>NUCLEOTIDE SEQUENCE [GENOMIC DNA]</scope>
    <source>
        <strain>FL</strain>
    </source>
</reference>
<reference key="2">
    <citation type="submission" date="1997-01" db="EMBL/GenBank/DDBJ databases">
        <authorList>
            <person name="Weber J.M."/>
        </authorList>
    </citation>
    <scope>SEQUENCE REVISION TO 443</scope>
</reference>
<feature type="initiator methionine" description="Removed; by host" evidence="1">
    <location>
        <position position="1"/>
    </location>
</feature>
<feature type="chain" id="PRO_0000221831" description="Hexon protein" evidence="1">
    <location>
        <begin position="2"/>
        <end position="909"/>
    </location>
</feature>
<feature type="site" description="Involved in interaction with pre-protein VI" evidence="1">
    <location>
        <position position="733"/>
    </location>
</feature>
<feature type="modified residue" description="Phosphotyrosine; by host" evidence="1">
    <location>
        <position position="897"/>
    </location>
</feature>
<evidence type="ECO:0000255" key="1">
    <source>
        <dbReference type="HAMAP-Rule" id="MF_04051"/>
    </source>
</evidence>
<evidence type="ECO:0000305" key="2"/>